<accession>Q5HU51</accession>
<gene>
    <name evidence="1" type="primary">cobB</name>
    <name type="ordered locus">CJE1194</name>
</gene>
<proteinExistence type="inferred from homology"/>
<feature type="chain" id="PRO_0000110302" description="NAD-dependent protein deacylase">
    <location>
        <begin position="1"/>
        <end position="233"/>
    </location>
</feature>
<feature type="domain" description="Deacetylase sirtuin-type" evidence="2">
    <location>
        <begin position="1"/>
        <end position="230"/>
    </location>
</feature>
<feature type="active site" description="Proton acceptor" evidence="2">
    <location>
        <position position="106"/>
    </location>
</feature>
<feature type="binding site" evidence="1">
    <location>
        <begin position="9"/>
        <end position="28"/>
    </location>
    <ligand>
        <name>NAD(+)</name>
        <dbReference type="ChEBI" id="CHEBI:57540"/>
    </ligand>
</feature>
<feature type="binding site" evidence="1">
    <location>
        <position position="53"/>
    </location>
    <ligand>
        <name>substrate</name>
    </ligand>
</feature>
<feature type="binding site" evidence="1">
    <location>
        <position position="56"/>
    </location>
    <ligand>
        <name>substrate</name>
    </ligand>
</feature>
<feature type="binding site" evidence="1">
    <location>
        <begin position="88"/>
        <end position="91"/>
    </location>
    <ligand>
        <name>NAD(+)</name>
        <dbReference type="ChEBI" id="CHEBI:57540"/>
    </ligand>
</feature>
<feature type="binding site" evidence="1">
    <location>
        <position position="114"/>
    </location>
    <ligand>
        <name>Zn(2+)</name>
        <dbReference type="ChEBI" id="CHEBI:29105"/>
    </ligand>
</feature>
<feature type="binding site" evidence="1">
    <location>
        <position position="117"/>
    </location>
    <ligand>
        <name>Zn(2+)</name>
        <dbReference type="ChEBI" id="CHEBI:29105"/>
    </ligand>
</feature>
<feature type="binding site" evidence="1">
    <location>
        <position position="133"/>
    </location>
    <ligand>
        <name>Zn(2+)</name>
        <dbReference type="ChEBI" id="CHEBI:29105"/>
    </ligand>
</feature>
<feature type="binding site" evidence="1">
    <location>
        <position position="136"/>
    </location>
    <ligand>
        <name>Zn(2+)</name>
        <dbReference type="ChEBI" id="CHEBI:29105"/>
    </ligand>
</feature>
<feature type="binding site" evidence="1">
    <location>
        <begin position="172"/>
        <end position="174"/>
    </location>
    <ligand>
        <name>NAD(+)</name>
        <dbReference type="ChEBI" id="CHEBI:57540"/>
    </ligand>
</feature>
<feature type="binding site" evidence="1">
    <location>
        <position position="213"/>
    </location>
    <ligand>
        <name>NAD(+)</name>
        <dbReference type="ChEBI" id="CHEBI:57540"/>
    </ligand>
</feature>
<keyword id="KW-0963">Cytoplasm</keyword>
<keyword id="KW-0479">Metal-binding</keyword>
<keyword id="KW-0520">NAD</keyword>
<keyword id="KW-0808">Transferase</keyword>
<keyword id="KW-0862">Zinc</keyword>
<organism>
    <name type="scientific">Campylobacter jejuni (strain RM1221)</name>
    <dbReference type="NCBI Taxonomy" id="195099"/>
    <lineage>
        <taxon>Bacteria</taxon>
        <taxon>Pseudomonadati</taxon>
        <taxon>Campylobacterota</taxon>
        <taxon>Epsilonproteobacteria</taxon>
        <taxon>Campylobacterales</taxon>
        <taxon>Campylobacteraceae</taxon>
        <taxon>Campylobacter</taxon>
    </lineage>
</organism>
<evidence type="ECO:0000255" key="1">
    <source>
        <dbReference type="HAMAP-Rule" id="MF_01121"/>
    </source>
</evidence>
<evidence type="ECO:0000255" key="2">
    <source>
        <dbReference type="PROSITE-ProRule" id="PRU00236"/>
    </source>
</evidence>
<reference key="1">
    <citation type="journal article" date="2005" name="PLoS Biol.">
        <title>Major structural differences and novel potential virulence mechanisms from the genomes of multiple Campylobacter species.</title>
        <authorList>
            <person name="Fouts D.E."/>
            <person name="Mongodin E.F."/>
            <person name="Mandrell R.E."/>
            <person name="Miller W.G."/>
            <person name="Rasko D.A."/>
            <person name="Ravel J."/>
            <person name="Brinkac L.M."/>
            <person name="DeBoy R.T."/>
            <person name="Parker C.T."/>
            <person name="Daugherty S.C."/>
            <person name="Dodson R.J."/>
            <person name="Durkin A.S."/>
            <person name="Madupu R."/>
            <person name="Sullivan S.A."/>
            <person name="Shetty J.U."/>
            <person name="Ayodeji M.A."/>
            <person name="Shvartsbeyn A."/>
            <person name="Schatz M.C."/>
            <person name="Badger J.H."/>
            <person name="Fraser C.M."/>
            <person name="Nelson K.E."/>
        </authorList>
    </citation>
    <scope>NUCLEOTIDE SEQUENCE [LARGE SCALE GENOMIC DNA]</scope>
    <source>
        <strain>RM1221</strain>
    </source>
</reference>
<dbReference type="EC" id="2.3.1.286" evidence="1 2"/>
<dbReference type="EMBL" id="CP000025">
    <property type="protein sequence ID" value="AAW35519.1"/>
    <property type="molecule type" value="Genomic_DNA"/>
</dbReference>
<dbReference type="RefSeq" id="WP_002779104.1">
    <property type="nucleotide sequence ID" value="NC_003912.7"/>
</dbReference>
<dbReference type="SMR" id="Q5HU51"/>
<dbReference type="KEGG" id="cjr:CJE1194"/>
<dbReference type="HOGENOM" id="CLU_023643_3_1_7"/>
<dbReference type="GO" id="GO:0005737">
    <property type="term" value="C:cytoplasm"/>
    <property type="evidence" value="ECO:0007669"/>
    <property type="project" value="UniProtKB-SubCell"/>
</dbReference>
<dbReference type="GO" id="GO:0017136">
    <property type="term" value="F:histone deacetylase activity, NAD-dependent"/>
    <property type="evidence" value="ECO:0007669"/>
    <property type="project" value="TreeGrafter"/>
</dbReference>
<dbReference type="GO" id="GO:0070403">
    <property type="term" value="F:NAD+ binding"/>
    <property type="evidence" value="ECO:0007669"/>
    <property type="project" value="UniProtKB-UniRule"/>
</dbReference>
<dbReference type="GO" id="GO:0036054">
    <property type="term" value="F:protein-malonyllysine demalonylase activity"/>
    <property type="evidence" value="ECO:0007669"/>
    <property type="project" value="InterPro"/>
</dbReference>
<dbReference type="GO" id="GO:0036055">
    <property type="term" value="F:protein-succinyllysine desuccinylase activity"/>
    <property type="evidence" value="ECO:0007669"/>
    <property type="project" value="UniProtKB-UniRule"/>
</dbReference>
<dbReference type="GO" id="GO:0008270">
    <property type="term" value="F:zinc ion binding"/>
    <property type="evidence" value="ECO:0007669"/>
    <property type="project" value="UniProtKB-UniRule"/>
</dbReference>
<dbReference type="Gene3D" id="3.30.1600.10">
    <property type="entry name" value="SIR2/SIRT2 'Small Domain"/>
    <property type="match status" value="1"/>
</dbReference>
<dbReference type="Gene3D" id="3.40.50.1220">
    <property type="entry name" value="TPP-binding domain"/>
    <property type="match status" value="1"/>
</dbReference>
<dbReference type="HAMAP" id="MF_01121">
    <property type="entry name" value="Sirtuin_ClassIII"/>
    <property type="match status" value="1"/>
</dbReference>
<dbReference type="InterPro" id="IPR029035">
    <property type="entry name" value="DHS-like_NAD/FAD-binding_dom"/>
</dbReference>
<dbReference type="InterPro" id="IPR050134">
    <property type="entry name" value="NAD-dep_sirtuin_deacylases"/>
</dbReference>
<dbReference type="InterPro" id="IPR003000">
    <property type="entry name" value="Sirtuin"/>
</dbReference>
<dbReference type="InterPro" id="IPR026591">
    <property type="entry name" value="Sirtuin_cat_small_dom_sf"/>
</dbReference>
<dbReference type="InterPro" id="IPR027546">
    <property type="entry name" value="Sirtuin_class_III"/>
</dbReference>
<dbReference type="InterPro" id="IPR026590">
    <property type="entry name" value="Ssirtuin_cat_dom"/>
</dbReference>
<dbReference type="PANTHER" id="PTHR11085:SF4">
    <property type="entry name" value="NAD-DEPENDENT PROTEIN DEACYLASE"/>
    <property type="match status" value="1"/>
</dbReference>
<dbReference type="PANTHER" id="PTHR11085">
    <property type="entry name" value="NAD-DEPENDENT PROTEIN DEACYLASE SIRTUIN-5, MITOCHONDRIAL-RELATED"/>
    <property type="match status" value="1"/>
</dbReference>
<dbReference type="Pfam" id="PF02146">
    <property type="entry name" value="SIR2"/>
    <property type="match status" value="1"/>
</dbReference>
<dbReference type="SUPFAM" id="SSF52467">
    <property type="entry name" value="DHS-like NAD/FAD-binding domain"/>
    <property type="match status" value="1"/>
</dbReference>
<dbReference type="PROSITE" id="PS50305">
    <property type="entry name" value="SIRTUIN"/>
    <property type="match status" value="1"/>
</dbReference>
<name>NPD_CAMJR</name>
<protein>
    <recommendedName>
        <fullName evidence="1">NAD-dependent protein deacylase</fullName>
        <ecNumber evidence="1 2">2.3.1.286</ecNumber>
    </recommendedName>
    <alternativeName>
        <fullName evidence="1">Regulatory protein SIR2 homolog</fullName>
    </alternativeName>
</protein>
<sequence>MKNIMILSGAGLSAPSGLKTFRDNDGLWEEYDVMEVCSATGFRKNPKKVLDFYDARRVQLQNVKPNHAHEKIAQLKEKWGKNLFVITQNVDDLLERAGCKDVVHLHGFLPELRCLKCEGIFNIGYEKIIDKQCPKCKSKDLRHNIVMFEEQAPAYATLYSLLNQTSLFISIGTSGAVLPVGRYASMCEKSILNIYEKDANLERYFDKIYIEDIINAIDKIALDIENFMKDGNV</sequence>
<comment type="function">
    <text evidence="1">NAD-dependent lysine deacetylase and desuccinylase that specifically removes acetyl and succinyl groups on target proteins. Modulates the activities of several proteins which are inactive in their acylated form.</text>
</comment>
<comment type="catalytic activity">
    <reaction evidence="1">
        <text>N(6)-acetyl-L-lysyl-[protein] + NAD(+) + H2O = 2''-O-acetyl-ADP-D-ribose + nicotinamide + L-lysyl-[protein]</text>
        <dbReference type="Rhea" id="RHEA:43636"/>
        <dbReference type="Rhea" id="RHEA-COMP:9752"/>
        <dbReference type="Rhea" id="RHEA-COMP:10731"/>
        <dbReference type="ChEBI" id="CHEBI:15377"/>
        <dbReference type="ChEBI" id="CHEBI:17154"/>
        <dbReference type="ChEBI" id="CHEBI:29969"/>
        <dbReference type="ChEBI" id="CHEBI:57540"/>
        <dbReference type="ChEBI" id="CHEBI:61930"/>
        <dbReference type="ChEBI" id="CHEBI:83767"/>
        <dbReference type="EC" id="2.3.1.286"/>
    </reaction>
</comment>
<comment type="catalytic activity">
    <reaction evidence="1">
        <text>N(6)-succinyl-L-lysyl-[protein] + NAD(+) + H2O = 2''-O-succinyl-ADP-D-ribose + nicotinamide + L-lysyl-[protein]</text>
        <dbReference type="Rhea" id="RHEA:47668"/>
        <dbReference type="Rhea" id="RHEA-COMP:9752"/>
        <dbReference type="Rhea" id="RHEA-COMP:11877"/>
        <dbReference type="ChEBI" id="CHEBI:15377"/>
        <dbReference type="ChEBI" id="CHEBI:17154"/>
        <dbReference type="ChEBI" id="CHEBI:29969"/>
        <dbReference type="ChEBI" id="CHEBI:57540"/>
        <dbReference type="ChEBI" id="CHEBI:87830"/>
        <dbReference type="ChEBI" id="CHEBI:87832"/>
    </reaction>
</comment>
<comment type="cofactor">
    <cofactor evidence="1">
        <name>Zn(2+)</name>
        <dbReference type="ChEBI" id="CHEBI:29105"/>
    </cofactor>
    <text evidence="1">Binds 1 zinc ion per subunit.</text>
</comment>
<comment type="subcellular location">
    <subcellularLocation>
        <location evidence="1">Cytoplasm</location>
    </subcellularLocation>
</comment>
<comment type="domain">
    <text evidence="1">2 residues (Tyr-53 and Arg-56) present in a large hydrophobic pocket are probably involved in substrate specificity. They are important for desuccinylation activity, but dispensable for deacetylation activity.</text>
</comment>
<comment type="similarity">
    <text evidence="1">Belongs to the sirtuin family. Class III subfamily.</text>
</comment>